<keyword id="KW-0014">AIDS</keyword>
<keyword id="KW-1035">Host cytoplasm</keyword>
<keyword id="KW-1048">Host nucleus</keyword>
<keyword id="KW-0945">Host-virus interaction</keyword>
<keyword id="KW-0488">Methylation</keyword>
<keyword id="KW-0509">mRNA transport</keyword>
<keyword id="KW-0597">Phosphoprotein</keyword>
<keyword id="KW-1185">Reference proteome</keyword>
<keyword id="KW-0694">RNA-binding</keyword>
<keyword id="KW-0813">Transport</keyword>
<protein>
    <recommendedName>
        <fullName evidence="1">Protein Rev</fullName>
    </recommendedName>
    <alternativeName>
        <fullName evidence="1">ART/TRS</fullName>
    </alternativeName>
    <alternativeName>
        <fullName evidence="1">Anti-repression transactivator</fullName>
    </alternativeName>
    <alternativeName>
        <fullName evidence="1">Regulator of expression of viral proteins</fullName>
    </alternativeName>
</protein>
<organism>
    <name type="scientific">Human immunodeficiency virus type 1 group M subtype C (isolate 92BR025)</name>
    <name type="common">HIV-1</name>
    <dbReference type="NCBI Taxonomy" id="388812"/>
    <lineage>
        <taxon>Viruses</taxon>
        <taxon>Riboviria</taxon>
        <taxon>Pararnavirae</taxon>
        <taxon>Artverviricota</taxon>
        <taxon>Revtraviricetes</taxon>
        <taxon>Ortervirales</taxon>
        <taxon>Retroviridae</taxon>
        <taxon>Orthoretrovirinae</taxon>
        <taxon>Lentivirus</taxon>
        <taxon>Human immunodeficiency virus type 1</taxon>
    </lineage>
</organism>
<proteinExistence type="inferred from homology"/>
<reference key="1">
    <citation type="journal article" date="1996" name="J. Virol.">
        <title>Molecular cloning and analysis of functional envelope genes from human immunodeficiency virus type 1 sequence subtypes A through G. The WHO and NIAID Networks for HIV Isolation and Characterization.</title>
        <authorList>
            <person name="Gao F."/>
            <person name="Morrison S.G."/>
            <person name="Robertson D.L."/>
            <person name="Thornton C.L."/>
            <person name="Craig S."/>
            <person name="Karlsson G."/>
            <person name="Sodroski J."/>
            <person name="Morgado M."/>
            <person name="Galvao-Castro B."/>
            <person name="von Briesen H."/>
            <person name="Beddows S."/>
            <person name="Weber J."/>
            <person name="Sharp P.M."/>
            <person name="Shaw G.M."/>
            <person name="Hahn B.H."/>
        </authorList>
    </citation>
    <scope>NUCLEOTIDE SEQUENCE [GENOMIC DNA]</scope>
</reference>
<reference key="2">
    <citation type="journal article" date="1999" name="Arch. Biochem. Biophys.">
        <title>The ins and outs of HIV Rev.</title>
        <authorList>
            <person name="Hope T.J."/>
        </authorList>
    </citation>
    <scope>REVIEW</scope>
</reference>
<sequence length="107" mass="12061">MAGRSGDSDEALLQAVRIIKILYQSNPYPKPEGTRQARRNRRRRWRARQRQIHSISERILSTCVGRPAEPVPFQLPPIERLNINCSESGGTSGTQQPQGNTERVGNP</sequence>
<name>REV_HV192</name>
<gene>
    <name evidence="1" type="primary">rev</name>
</gene>
<evidence type="ECO:0000255" key="1">
    <source>
        <dbReference type="HAMAP-Rule" id="MF_04077"/>
    </source>
</evidence>
<evidence type="ECO:0000256" key="2">
    <source>
        <dbReference type="SAM" id="MobiDB-lite"/>
    </source>
</evidence>
<accession>O12162</accession>
<organismHost>
    <name type="scientific">Homo sapiens</name>
    <name type="common">Human</name>
    <dbReference type="NCBI Taxonomy" id="9606"/>
</organismHost>
<dbReference type="EMBL" id="U52953">
    <property type="protein sequence ID" value="AAB61130.1"/>
    <property type="molecule type" value="Genomic_DNA"/>
</dbReference>
<dbReference type="SMR" id="O12162"/>
<dbReference type="Proteomes" id="UP000007686">
    <property type="component" value="Segment"/>
</dbReference>
<dbReference type="GO" id="GO:0030430">
    <property type="term" value="C:host cell cytoplasm"/>
    <property type="evidence" value="ECO:0007669"/>
    <property type="project" value="UniProtKB-SubCell"/>
</dbReference>
<dbReference type="GO" id="GO:0044196">
    <property type="term" value="C:host cell nucleolus"/>
    <property type="evidence" value="ECO:0007669"/>
    <property type="project" value="UniProtKB-SubCell"/>
</dbReference>
<dbReference type="GO" id="GO:0003700">
    <property type="term" value="F:DNA-binding transcription factor activity"/>
    <property type="evidence" value="ECO:0007669"/>
    <property type="project" value="UniProtKB-UniRule"/>
</dbReference>
<dbReference type="GO" id="GO:0003723">
    <property type="term" value="F:RNA binding"/>
    <property type="evidence" value="ECO:0007669"/>
    <property type="project" value="UniProtKB-UniRule"/>
</dbReference>
<dbReference type="GO" id="GO:0051028">
    <property type="term" value="P:mRNA transport"/>
    <property type="evidence" value="ECO:0007669"/>
    <property type="project" value="UniProtKB-UniRule"/>
</dbReference>
<dbReference type="GO" id="GO:0016032">
    <property type="term" value="P:viral process"/>
    <property type="evidence" value="ECO:0007669"/>
    <property type="project" value="UniProtKB-UniRule"/>
</dbReference>
<dbReference type="Gene3D" id="6.10.140.630">
    <property type="match status" value="1"/>
</dbReference>
<dbReference type="HAMAP" id="MF_04077">
    <property type="entry name" value="REV_HIV1"/>
    <property type="match status" value="1"/>
</dbReference>
<dbReference type="InterPro" id="IPR000625">
    <property type="entry name" value="REV_protein"/>
</dbReference>
<dbReference type="Pfam" id="PF00424">
    <property type="entry name" value="REV"/>
    <property type="match status" value="1"/>
</dbReference>
<comment type="function">
    <text evidence="1">Escorts unspliced or incompletely spliced viral pre-mRNAs (late transcripts) out of the nucleus of infected cells. These pre-mRNAs carry a recognition sequence called Rev responsive element (RRE) located in the env gene, that is not present in fully spliced viral mRNAs (early transcripts). This function is essential since most viral proteins are translated from unspliced or partially spliced pre-mRNAs which cannot exit the nucleus by the pathway used by fully processed cellular mRNAs. Rev itself is translated from a fully spliced mRNA that readily exits the nucleus. Rev's nuclear localization signal (NLS) binds directly to KPNB1/Importin beta-1 without previous binding to KPNA1/Importin alpha-1. KPNB1 binds to the GDP bound form of RAN (Ran-GDP) and targets Rev to the nucleus. In the nucleus, the conversion from Ran-GDP to Ran-GTP dissociates Rev from KPNB1 and allows Rev's binding to the RRE in viral pre-mRNAs. Rev multimerization on the RRE via cooperative assembly exposes its nuclear export signal (NES) to the surface. Rev can then form a complex with XPO1/CRM1 and Ran-GTP, leading to nuclear export of the complex. Conversion from Ran-GTP to Ran-GDP mediates dissociation of the Rev/RRE/XPO1/RAN complex, so that Rev can return to the nucleus for a subsequent round of export. Beside KPNB1, also seems to interact with TNPO1/Transportin-1, RANBP5/IPO5 and IPO7/RANBP7 for nuclear import. The nucleoporin-like HRB/RIP is an essential cofactor that probably indirectly interacts with Rev to release HIV RNAs from the perinuclear region to the cytoplasm.</text>
</comment>
<comment type="subunit">
    <text evidence="1">Homomultimer; when bound to the RRE. Multimeric assembly is essential for activity and may involve XPO1. Binds to human KPNB1, XPO1, TNPO1, RANBP5 and IPO7. Interacts with the viral Integrase. Interacts with human KHDRBS1. Interacts with human NAP1; this interaction decreases Rev multimerization and stimulates its activity. Interacts with human DEAD-box helicases DDX3 and DDX24; these interactions may serve for viral RNA export to the cytoplasm and packaging, respectively. Interacts with human PSIP1; this interaction may inhibit HIV-1 DNA integration by promoting dissociation of the Integrase-LEDGF/p75 complex.</text>
</comment>
<comment type="subcellular location">
    <subcellularLocation>
        <location evidence="1">Host nucleus</location>
        <location evidence="1">Host nucleolus</location>
    </subcellularLocation>
    <subcellularLocation>
        <location evidence="1">Host cytoplasm</location>
    </subcellularLocation>
    <text evidence="1">The presence of both nuclear import and nuclear export signals leads to continuous shuttling between the nucleus and cytoplasm.</text>
</comment>
<comment type="domain">
    <text evidence="1">The RNA-binding motif binds to the RRE, a 240 bp stem-and-loop structure present in incompletely spliced viral pre-mRNAs. This region also contains the NLS which mediates nuclear localization via KPNB1 binding and, when the N-terminal sequence is present, nucleolar targeting. These overlapping functions prevent Rev bound to RRE from undesirable return to the nucleus. When Rev binds the RRE, the NLS becomes masked while the NES remains accessible. The leucine-rich NES mediates binding to human XPO1.</text>
</comment>
<comment type="PTM">
    <text evidence="1">Asymmetrically arginine dimethylated at one site by host PRMT6. Methylation impairs the RNA-binding activity and export of viral RNA from the nucleus to the cytoplasm.</text>
</comment>
<comment type="PTM">
    <text evidence="1">Phosphorylated by protein kinase CK2. Presence of, and maybe binding to the N-terminus of the regulatory beta subunit of CK2 is necessary for CK2-mediated Rev's phosphorylation.</text>
</comment>
<comment type="miscellaneous">
    <text evidence="1">HIV-1 lineages are divided in three main groups, M (for Major), O (for Outlier), and N (for New, or Non-M, Non-O). The vast majority of strains found worldwide belong to the group M. Group O seems to be endemic to and largely confined to Cameroon and neighboring countries in West Central Africa, where these viruses represent a small minority of HIV-1 strains. The group N is represented by a limited number of isolates from Cameroonian persons. The group M is further subdivided in 9 clades or subtypes (A to D, F to H, J and K).</text>
</comment>
<comment type="similarity">
    <text evidence="1">Belongs to the HIV-1 REV protein family.</text>
</comment>
<feature type="chain" id="PRO_0000244993" description="Protein Rev">
    <location>
        <begin position="1"/>
        <end position="107"/>
    </location>
</feature>
<feature type="region of interest" description="Homomultimerization" evidence="1">
    <location>
        <begin position="18"/>
        <end position="26"/>
    </location>
</feature>
<feature type="region of interest" description="Disordered" evidence="2">
    <location>
        <begin position="26"/>
        <end position="50"/>
    </location>
</feature>
<feature type="region of interest" description="Disordered" evidence="2">
    <location>
        <begin position="82"/>
        <end position="107"/>
    </location>
</feature>
<feature type="short sequence motif" description="Nuclear localization signal and RNA-binding (RRE)" evidence="1">
    <location>
        <begin position="34"/>
        <end position="50"/>
    </location>
</feature>
<feature type="short sequence motif" description="Nuclear export signal and binding to XPO1" evidence="1">
    <location>
        <begin position="73"/>
        <end position="84"/>
    </location>
</feature>
<feature type="compositionally biased region" description="Basic residues" evidence="2">
    <location>
        <begin position="36"/>
        <end position="50"/>
    </location>
</feature>
<feature type="compositionally biased region" description="Low complexity" evidence="2">
    <location>
        <begin position="86"/>
        <end position="101"/>
    </location>
</feature>
<feature type="modified residue" description="Phosphoserine; by host CK2" evidence="1">
    <location>
        <position position="5"/>
    </location>
</feature>
<feature type="modified residue" description="Phosphoserine; by host CK2" evidence="1">
    <location>
        <position position="8"/>
    </location>
</feature>
<feature type="modified residue" description="Phosphoserine; by host" evidence="1">
    <location>
        <position position="92"/>
    </location>
</feature>